<proteinExistence type="inferred from homology"/>
<name>YR818_MIMIV</name>
<feature type="signal peptide" evidence="2">
    <location>
        <begin position="1"/>
        <end position="19"/>
    </location>
</feature>
<feature type="chain" id="PRO_0000253996" description="Putative serine/threonine-protein kinase/receptor R818">
    <location>
        <begin position="20"/>
        <end position="1651"/>
    </location>
</feature>
<feature type="transmembrane region" description="Helical" evidence="2">
    <location>
        <begin position="749"/>
        <end position="769"/>
    </location>
</feature>
<feature type="domain" description="Protein kinase 1" evidence="4">
    <location>
        <begin position="793"/>
        <end position="1057"/>
    </location>
</feature>
<feature type="domain" description="Guanylate cyclase" evidence="3">
    <location>
        <begin position="1135"/>
        <end position="1278"/>
    </location>
</feature>
<feature type="domain" description="Protein kinase 2" evidence="4">
    <location>
        <begin position="1394"/>
        <end position="1645"/>
    </location>
</feature>
<feature type="region of interest" description="Disordered" evidence="5">
    <location>
        <begin position="1089"/>
        <end position="1115"/>
    </location>
</feature>
<feature type="compositionally biased region" description="Low complexity" evidence="5">
    <location>
        <begin position="1100"/>
        <end position="1115"/>
    </location>
</feature>
<feature type="active site" description="Proton acceptor" evidence="1">
    <location>
        <position position="915"/>
    </location>
</feature>
<feature type="active site" description="Proton acceptor" evidence="1">
    <location>
        <position position="1515"/>
    </location>
</feature>
<feature type="binding site" evidence="4">
    <location>
        <begin position="799"/>
        <end position="807"/>
    </location>
    <ligand>
        <name>ATP</name>
        <dbReference type="ChEBI" id="CHEBI:30616"/>
    </ligand>
</feature>
<feature type="binding site" evidence="4">
    <location>
        <position position="820"/>
    </location>
    <ligand>
        <name>ATP</name>
        <dbReference type="ChEBI" id="CHEBI:30616"/>
    </ligand>
</feature>
<feature type="binding site" evidence="4">
    <location>
        <begin position="1400"/>
        <end position="1408"/>
    </location>
    <ligand>
        <name>ATP</name>
        <dbReference type="ChEBI" id="CHEBI:30616"/>
    </ligand>
</feature>
<feature type="binding site" evidence="4">
    <location>
        <position position="1421"/>
    </location>
    <ligand>
        <name>ATP</name>
        <dbReference type="ChEBI" id="CHEBI:30616"/>
    </ligand>
</feature>
<feature type="glycosylation site" description="N-linked (GlcNAc...) asparagine; by host" evidence="2">
    <location>
        <position position="111"/>
    </location>
</feature>
<feature type="glycosylation site" description="N-linked (GlcNAc...) asparagine; by host" evidence="2">
    <location>
        <position position="135"/>
    </location>
</feature>
<feature type="glycosylation site" description="N-linked (GlcNAc...) asparagine; by host" evidence="2">
    <location>
        <position position="190"/>
    </location>
</feature>
<feature type="glycosylation site" description="N-linked (GlcNAc...) asparagine; by host" evidence="2">
    <location>
        <position position="236"/>
    </location>
</feature>
<feature type="glycosylation site" description="N-linked (GlcNAc...) asparagine; by host" evidence="2">
    <location>
        <position position="275"/>
    </location>
</feature>
<feature type="glycosylation site" description="N-linked (GlcNAc...) asparagine; by host" evidence="2">
    <location>
        <position position="276"/>
    </location>
</feature>
<feature type="glycosylation site" description="N-linked (GlcNAc...) asparagine; by host" evidence="2">
    <location>
        <position position="287"/>
    </location>
</feature>
<feature type="glycosylation site" description="N-linked (GlcNAc...) asparagine; by host" evidence="2">
    <location>
        <position position="452"/>
    </location>
</feature>
<feature type="glycosylation site" description="N-linked (GlcNAc...) asparagine; by host" evidence="2">
    <location>
        <position position="455"/>
    </location>
</feature>
<feature type="glycosylation site" description="N-linked (GlcNAc...) asparagine; by host" evidence="2">
    <location>
        <position position="477"/>
    </location>
</feature>
<feature type="glycosylation site" description="N-linked (GlcNAc...) asparagine; by host" evidence="2">
    <location>
        <position position="495"/>
    </location>
</feature>
<feature type="glycosylation site" description="N-linked (GlcNAc...) asparagine; by host" evidence="2">
    <location>
        <position position="540"/>
    </location>
</feature>
<feature type="glycosylation site" description="N-linked (GlcNAc...) asparagine; by host" evidence="2">
    <location>
        <position position="596"/>
    </location>
</feature>
<feature type="glycosylation site" description="N-linked (GlcNAc...) asparagine; by host" evidence="2">
    <location>
        <position position="722"/>
    </location>
</feature>
<gene>
    <name type="ordered locus">MIMI_R818</name>
</gene>
<reference key="1">
    <citation type="journal article" date="2004" name="Science">
        <title>The 1.2-megabase genome sequence of Mimivirus.</title>
        <authorList>
            <person name="Raoult D."/>
            <person name="Audic S."/>
            <person name="Robert C."/>
            <person name="Abergel C."/>
            <person name="Renesto P."/>
            <person name="Ogata H."/>
            <person name="La Scola B."/>
            <person name="Susan M."/>
            <person name="Claverie J.-M."/>
        </authorList>
    </citation>
    <scope>NUCLEOTIDE SEQUENCE [LARGE SCALE GENOMIC DNA]</scope>
    <source>
        <strain>Rowbotham-Bradford</strain>
    </source>
</reference>
<sequence length="1651" mass="184362">MKSIGIFVVALWLTHFCDGGQLGARIYSSGSESSVLLFDQYINKYAFTNGDVKIIYEGKSIFEILSETYVTDFNIFDRAISQDNLDMFQIVQFPLAGQAIVMTYNLPELVNSSYRLVIDRETLGKIWYGAISKWNDTAIQNLNPTVGHLLPDTDIILGYSDDYIMTISGLIKMALSSFSPEFDTELKYANNTFNGMNPTKNGRGHNIGETSTVRLEWLKKTSYGLTYINYADVYNNGTDSTVPMNMYNKAGYFVEPNLVSVQAAMSDFKIFYANNNSTIDIYDAPGNKSWPLAYVNYLGCSSAFGPMADCTRTIQMTNFIAWIYTNDAASESAIELQFYPLDKTLQKVAIDNLYNIKCNNIAVLSQQYLIGFGAPISVMSLWPNSWTTVASTARYYSAPSSQALELQETYGADFGITVTGVPNTYFNKMPDLGVMPLAAFTIVPAYNIPAINGTNGTLILDYEIITDIYLGIINNWNDSRIRALNGIEINRKLPNVSITVIYQAVSSDYNFMFTDFMSKKSPKFAKKIGSTYFPILTLPNNSMIITTDIYDVGNQLISNSNSFAFWPYFGITMLSRQPTVQAASIRTEKGNIISSNSTTLEKAINNFISKGGSIEDAPYIMGENDESWPLSALMTMIYRQSTIHYAAKAAAVADFAYWTQSNPTAINIATIQGMYVASNNPTLKSRNLNLLKNFVVDGEPISSIANCIYQGTICSDMGTCNNNSCLCNSYRKGIYCENIVSSSGESIGIILAIVIPVSFVICCIIIVLVIALIVSIRLHQRVEDEWEVDFHELDFMESLGSGGSGEVFKAMWKGTEVAVKKLVNSNITKDAERNFKQEIHRMTSLRHPNVVLFMAASTRPPNMCIVMEFMSLGSLYDLLGNELVTEIPPVLRIRIAYQAAKGMHFLHSSDIVHRDLKSLNLLLDSKWNVKVSDFGLTKIKDNNKGKSSTKEDSVCSIQWTAPEVLSEKQDIDYILADVYSFGIIMWELMTRLRPYIGLSPAAIAVAVIRDNLRPEIQEEDINLMSSDYVELVNICWHKDTMIRPSFLEIMTKLSTLIGGSGITTGTSTSSSNQSSDYIGPNIITRTKNIHNNDETKNSFGSTTYGSNTISSSSNTESDKILSKLNKKKIPTGEVIIVFTDIISAEQLWHHNPLAMKNATVLYNAVIRETLDKIGGYESFIYKDHNSGEGSFCLVFQEAIDAIDFCSISQKKLLEIDWPEELLDHPAAASEKDINGTMIFAGPRVRMGLHAGTVKIMQDPVTRRYEYSGVTVNIAAKITMMTHGGQVIMSEQVTDKISNNDCSNIKSLGQIEITDTNNYKVNIFELRIEGLIGRFFGGVAFYNYDSVTESTDLDDTYPDSLNFSTNGILYGGIKQENEYLSSAGLCRWIINYDDIQIGKQIGVGSYGIVNMGKWKNINVAVKKFVKQKIDEKQMLEFRAEIAFLSQLRHPHIILMIGACLKRPNICIVTEFMGNGSLRNVIKTTKPEWKLKIKMLYQTALGIGYLHNSDPIIIHRDIKPSNILVDDSMNVKIADFGFARIKEENSVMTRCGTPCWTAPEIIRGEKYTEKVDVFSFGIVMWEVLTCKEPFSGCNFMKVSMDILEGARPQIPSDCPIDFTKLMKQCWHAKPDKRPSMEDVIMGLNDMLGPEKSL</sequence>
<protein>
    <recommendedName>
        <fullName>Putative serine/threonine-protein kinase/receptor R818</fullName>
        <ecNumber>2.7.11.1</ecNumber>
    </recommendedName>
</protein>
<dbReference type="EC" id="2.7.11.1"/>
<dbReference type="EMBL" id="AY653733">
    <property type="protein sequence ID" value="AAV51078.1"/>
    <property type="molecule type" value="Genomic_DNA"/>
</dbReference>
<dbReference type="SMR" id="Q5UQG7"/>
<dbReference type="KEGG" id="vg:9925481"/>
<dbReference type="Proteomes" id="UP000001134">
    <property type="component" value="Genome"/>
</dbReference>
<dbReference type="GO" id="GO:0016020">
    <property type="term" value="C:membrane"/>
    <property type="evidence" value="ECO:0007669"/>
    <property type="project" value="UniProtKB-SubCell"/>
</dbReference>
<dbReference type="GO" id="GO:0005524">
    <property type="term" value="F:ATP binding"/>
    <property type="evidence" value="ECO:0007669"/>
    <property type="project" value="UniProtKB-KW"/>
</dbReference>
<dbReference type="GO" id="GO:0106310">
    <property type="term" value="F:protein serine kinase activity"/>
    <property type="evidence" value="ECO:0007669"/>
    <property type="project" value="RHEA"/>
</dbReference>
<dbReference type="GO" id="GO:0004674">
    <property type="term" value="F:protein serine/threonine kinase activity"/>
    <property type="evidence" value="ECO:0007669"/>
    <property type="project" value="UniProtKB-KW"/>
</dbReference>
<dbReference type="GO" id="GO:0009190">
    <property type="term" value="P:cyclic nucleotide biosynthetic process"/>
    <property type="evidence" value="ECO:0007669"/>
    <property type="project" value="InterPro"/>
</dbReference>
<dbReference type="GO" id="GO:0035556">
    <property type="term" value="P:intracellular signal transduction"/>
    <property type="evidence" value="ECO:0007669"/>
    <property type="project" value="InterPro"/>
</dbReference>
<dbReference type="CDD" id="cd13999">
    <property type="entry name" value="STKc_MAP3K-like"/>
    <property type="match status" value="2"/>
</dbReference>
<dbReference type="FunFam" id="3.30.200.20:FF:000060">
    <property type="entry name" value="Serine/threonine-protein kinase isoform 1"/>
    <property type="match status" value="1"/>
</dbReference>
<dbReference type="FunFam" id="3.30.200.20:FF:000180">
    <property type="entry name" value="serine/threonine-protein kinase STY46-like"/>
    <property type="match status" value="1"/>
</dbReference>
<dbReference type="Gene3D" id="3.30.70.1230">
    <property type="entry name" value="Nucleotide cyclase"/>
    <property type="match status" value="1"/>
</dbReference>
<dbReference type="Gene3D" id="3.40.190.10">
    <property type="entry name" value="Periplasmic binding protein-like II"/>
    <property type="match status" value="4"/>
</dbReference>
<dbReference type="Gene3D" id="3.30.200.20">
    <property type="entry name" value="Phosphorylase Kinase, domain 1"/>
    <property type="match status" value="2"/>
</dbReference>
<dbReference type="Gene3D" id="1.10.510.10">
    <property type="entry name" value="Transferase(Phosphotransferase) domain 1"/>
    <property type="match status" value="2"/>
</dbReference>
<dbReference type="InterPro" id="IPR001054">
    <property type="entry name" value="A/G_cyclase"/>
</dbReference>
<dbReference type="InterPro" id="IPR011009">
    <property type="entry name" value="Kinase-like_dom_sf"/>
</dbReference>
<dbReference type="InterPro" id="IPR029787">
    <property type="entry name" value="Nucleotide_cyclase"/>
</dbReference>
<dbReference type="InterPro" id="IPR000719">
    <property type="entry name" value="Prot_kinase_dom"/>
</dbReference>
<dbReference type="InterPro" id="IPR017441">
    <property type="entry name" value="Protein_kinase_ATP_BS"/>
</dbReference>
<dbReference type="InterPro" id="IPR001245">
    <property type="entry name" value="Ser-Thr/Tyr_kinase_cat_dom"/>
</dbReference>
<dbReference type="InterPro" id="IPR008271">
    <property type="entry name" value="Ser/Thr_kinase_AS"/>
</dbReference>
<dbReference type="InterPro" id="IPR051681">
    <property type="entry name" value="Ser/Thr_Kinases-Pseudokinases"/>
</dbReference>
<dbReference type="PANTHER" id="PTHR44329">
    <property type="entry name" value="SERINE/THREONINE-PROTEIN KINASE TNNI3K-RELATED"/>
    <property type="match status" value="1"/>
</dbReference>
<dbReference type="Pfam" id="PF00211">
    <property type="entry name" value="Guanylate_cyc"/>
    <property type="match status" value="1"/>
</dbReference>
<dbReference type="Pfam" id="PF07714">
    <property type="entry name" value="PK_Tyr_Ser-Thr"/>
    <property type="match status" value="2"/>
</dbReference>
<dbReference type="PRINTS" id="PR00109">
    <property type="entry name" value="TYRKINASE"/>
</dbReference>
<dbReference type="SMART" id="SM00044">
    <property type="entry name" value="CYCc"/>
    <property type="match status" value="1"/>
</dbReference>
<dbReference type="SMART" id="SM00220">
    <property type="entry name" value="S_TKc"/>
    <property type="match status" value="2"/>
</dbReference>
<dbReference type="SUPFAM" id="SSF55073">
    <property type="entry name" value="Nucleotide cyclase"/>
    <property type="match status" value="1"/>
</dbReference>
<dbReference type="SUPFAM" id="SSF53850">
    <property type="entry name" value="Periplasmic binding protein-like II"/>
    <property type="match status" value="2"/>
</dbReference>
<dbReference type="SUPFAM" id="SSF56112">
    <property type="entry name" value="Protein kinase-like (PK-like)"/>
    <property type="match status" value="2"/>
</dbReference>
<dbReference type="PROSITE" id="PS50125">
    <property type="entry name" value="GUANYLATE_CYCLASE_2"/>
    <property type="match status" value="1"/>
</dbReference>
<dbReference type="PROSITE" id="PS00107">
    <property type="entry name" value="PROTEIN_KINASE_ATP"/>
    <property type="match status" value="2"/>
</dbReference>
<dbReference type="PROSITE" id="PS50011">
    <property type="entry name" value="PROTEIN_KINASE_DOM"/>
    <property type="match status" value="2"/>
</dbReference>
<dbReference type="PROSITE" id="PS00108">
    <property type="entry name" value="PROTEIN_KINASE_ST"/>
    <property type="match status" value="2"/>
</dbReference>
<accession>Q5UQG7</accession>
<organism>
    <name type="scientific">Acanthamoeba polyphaga mimivirus</name>
    <name type="common">APMV</name>
    <dbReference type="NCBI Taxonomy" id="212035"/>
    <lineage>
        <taxon>Viruses</taxon>
        <taxon>Varidnaviria</taxon>
        <taxon>Bamfordvirae</taxon>
        <taxon>Nucleocytoviricota</taxon>
        <taxon>Megaviricetes</taxon>
        <taxon>Imitervirales</taxon>
        <taxon>Mimiviridae</taxon>
        <taxon>Megamimivirinae</taxon>
        <taxon>Mimivirus</taxon>
        <taxon>Mimivirus bradfordmassiliense</taxon>
    </lineage>
</organism>
<comment type="catalytic activity">
    <reaction>
        <text>L-seryl-[protein] + ATP = O-phospho-L-seryl-[protein] + ADP + H(+)</text>
        <dbReference type="Rhea" id="RHEA:17989"/>
        <dbReference type="Rhea" id="RHEA-COMP:9863"/>
        <dbReference type="Rhea" id="RHEA-COMP:11604"/>
        <dbReference type="ChEBI" id="CHEBI:15378"/>
        <dbReference type="ChEBI" id="CHEBI:29999"/>
        <dbReference type="ChEBI" id="CHEBI:30616"/>
        <dbReference type="ChEBI" id="CHEBI:83421"/>
        <dbReference type="ChEBI" id="CHEBI:456216"/>
        <dbReference type="EC" id="2.7.11.1"/>
    </reaction>
</comment>
<comment type="catalytic activity">
    <reaction>
        <text>L-threonyl-[protein] + ATP = O-phospho-L-threonyl-[protein] + ADP + H(+)</text>
        <dbReference type="Rhea" id="RHEA:46608"/>
        <dbReference type="Rhea" id="RHEA-COMP:11060"/>
        <dbReference type="Rhea" id="RHEA-COMP:11605"/>
        <dbReference type="ChEBI" id="CHEBI:15378"/>
        <dbReference type="ChEBI" id="CHEBI:30013"/>
        <dbReference type="ChEBI" id="CHEBI:30616"/>
        <dbReference type="ChEBI" id="CHEBI:61977"/>
        <dbReference type="ChEBI" id="CHEBI:456216"/>
        <dbReference type="EC" id="2.7.11.1"/>
    </reaction>
</comment>
<comment type="subcellular location">
    <subcellularLocation>
        <location evidence="6">Membrane</location>
        <topology evidence="6">Single-pass type I membrane protein</topology>
    </subcellularLocation>
</comment>
<organismHost>
    <name type="scientific">Acanthamoeba polyphaga</name>
    <name type="common">Amoeba</name>
    <dbReference type="NCBI Taxonomy" id="5757"/>
</organismHost>
<keyword id="KW-0067">ATP-binding</keyword>
<keyword id="KW-0325">Glycoprotein</keyword>
<keyword id="KW-0418">Kinase</keyword>
<keyword id="KW-0472">Membrane</keyword>
<keyword id="KW-0547">Nucleotide-binding</keyword>
<keyword id="KW-0675">Receptor</keyword>
<keyword id="KW-1185">Reference proteome</keyword>
<keyword id="KW-0677">Repeat</keyword>
<keyword id="KW-0723">Serine/threonine-protein kinase</keyword>
<keyword id="KW-0732">Signal</keyword>
<keyword id="KW-0808">Transferase</keyword>
<keyword id="KW-0812">Transmembrane</keyword>
<keyword id="KW-1133">Transmembrane helix</keyword>
<evidence type="ECO:0000250" key="1"/>
<evidence type="ECO:0000255" key="2"/>
<evidence type="ECO:0000255" key="3">
    <source>
        <dbReference type="PROSITE-ProRule" id="PRU00099"/>
    </source>
</evidence>
<evidence type="ECO:0000255" key="4">
    <source>
        <dbReference type="PROSITE-ProRule" id="PRU00159"/>
    </source>
</evidence>
<evidence type="ECO:0000256" key="5">
    <source>
        <dbReference type="SAM" id="MobiDB-lite"/>
    </source>
</evidence>
<evidence type="ECO:0000305" key="6"/>